<name>AGUA_LATSS</name>
<organism>
    <name type="scientific">Latilactobacillus sakei subsp. sakei (strain 23K)</name>
    <name type="common">Lactobacillus sakei subsp. sakei</name>
    <dbReference type="NCBI Taxonomy" id="314315"/>
    <lineage>
        <taxon>Bacteria</taxon>
        <taxon>Bacillati</taxon>
        <taxon>Bacillota</taxon>
        <taxon>Bacilli</taxon>
        <taxon>Lactobacillales</taxon>
        <taxon>Lactobacillaceae</taxon>
        <taxon>Latilactobacillus</taxon>
    </lineage>
</organism>
<dbReference type="EC" id="3.5.3.12" evidence="1"/>
<dbReference type="EMBL" id="AF349639">
    <property type="protein sequence ID" value="AAL98713.1"/>
    <property type="molecule type" value="Genomic_DNA"/>
</dbReference>
<dbReference type="EMBL" id="CR936503">
    <property type="protein sequence ID" value="CAI54369.1"/>
    <property type="status" value="ALT_INIT"/>
    <property type="molecule type" value="Genomic_DNA"/>
</dbReference>
<dbReference type="RefSeq" id="WP_011373784.1">
    <property type="nucleotide sequence ID" value="NC_007576.1"/>
</dbReference>
<dbReference type="SMR" id="Q8RPX2"/>
<dbReference type="STRING" id="314315.LCA_0070"/>
<dbReference type="KEGG" id="lsa:LCA_0070"/>
<dbReference type="eggNOG" id="COG2957">
    <property type="taxonomic scope" value="Bacteria"/>
</dbReference>
<dbReference type="HOGENOM" id="CLU_037682_1_0_9"/>
<dbReference type="OrthoDB" id="9808013at2"/>
<dbReference type="Proteomes" id="UP000002707">
    <property type="component" value="Chromosome"/>
</dbReference>
<dbReference type="GO" id="GO:0047632">
    <property type="term" value="F:agmatine deiminase activity"/>
    <property type="evidence" value="ECO:0007669"/>
    <property type="project" value="UniProtKB-UniRule"/>
</dbReference>
<dbReference type="GO" id="GO:0004668">
    <property type="term" value="F:protein-arginine deiminase activity"/>
    <property type="evidence" value="ECO:0007669"/>
    <property type="project" value="InterPro"/>
</dbReference>
<dbReference type="GO" id="GO:0009446">
    <property type="term" value="P:putrescine biosynthetic process"/>
    <property type="evidence" value="ECO:0007669"/>
    <property type="project" value="InterPro"/>
</dbReference>
<dbReference type="Gene3D" id="3.75.10.10">
    <property type="entry name" value="L-arginine/glycine Amidinotransferase, Chain A"/>
    <property type="match status" value="1"/>
</dbReference>
<dbReference type="HAMAP" id="MF_01841">
    <property type="entry name" value="Agmatine_deimin"/>
    <property type="match status" value="1"/>
</dbReference>
<dbReference type="InterPro" id="IPR017754">
    <property type="entry name" value="Agmatine_deiminase"/>
</dbReference>
<dbReference type="InterPro" id="IPR007466">
    <property type="entry name" value="Peptidyl-Arg-deiminase_porph"/>
</dbReference>
<dbReference type="NCBIfam" id="TIGR03380">
    <property type="entry name" value="agmatine_aguA"/>
    <property type="match status" value="1"/>
</dbReference>
<dbReference type="NCBIfam" id="NF010070">
    <property type="entry name" value="PRK13551.1"/>
    <property type="match status" value="1"/>
</dbReference>
<dbReference type="PANTHER" id="PTHR31377">
    <property type="entry name" value="AGMATINE DEIMINASE-RELATED"/>
    <property type="match status" value="1"/>
</dbReference>
<dbReference type="PANTHER" id="PTHR31377:SF0">
    <property type="entry name" value="AGMATINE DEIMINASE-RELATED"/>
    <property type="match status" value="1"/>
</dbReference>
<dbReference type="Pfam" id="PF04371">
    <property type="entry name" value="PAD_porph"/>
    <property type="match status" value="1"/>
</dbReference>
<dbReference type="SUPFAM" id="SSF55909">
    <property type="entry name" value="Pentein"/>
    <property type="match status" value="1"/>
</dbReference>
<accession>Q8RPX2</accession>
<accession>Q38ZK8</accession>
<feature type="chain" id="PRO_0000194327" description="Putative agmatine deiminase">
    <location>
        <begin position="1"/>
        <end position="365"/>
    </location>
</feature>
<feature type="active site" description="Amidino-cysteine intermediate" evidence="1">
    <location>
        <position position="356"/>
    </location>
</feature>
<reference key="1">
    <citation type="journal article" date="2002" name="Microbiology">
        <title>Physical and genetic map of the Lactobacillus sakei 23K chromosome.</title>
        <authorList>
            <person name="Dudez A.-M."/>
            <person name="Chaillou S."/>
            <person name="Hissler L."/>
            <person name="Stentz R."/>
            <person name="Champomier-Verges M.-C."/>
            <person name="Alpert C.-A."/>
            <person name="Zagorec M."/>
        </authorList>
    </citation>
    <scope>NUCLEOTIDE SEQUENCE [LARGE SCALE GENOMIC DNA]</scope>
</reference>
<reference key="2">
    <citation type="journal article" date="2005" name="Nat. Biotechnol.">
        <title>The complete genome sequence of the meat-borne lactic acid bacterium Lactobacillus sakei 23K.</title>
        <authorList>
            <person name="Chaillou S."/>
            <person name="Champomier-Verges M.-C."/>
            <person name="Cornet M."/>
            <person name="Crutz-Le Coq A.-M."/>
            <person name="Dudez A.-M."/>
            <person name="Martin V."/>
            <person name="Beaufils S."/>
            <person name="Darbon-Rongere E."/>
            <person name="Bossy R."/>
            <person name="Loux V."/>
            <person name="Zagorec M."/>
        </authorList>
    </citation>
    <scope>NUCLEOTIDE SEQUENCE [LARGE SCALE GENOMIC DNA]</scope>
    <source>
        <strain>23K</strain>
    </source>
</reference>
<protein>
    <recommendedName>
        <fullName evidence="1">Putative agmatine deiminase</fullName>
        <ecNumber evidence="1">3.5.3.12</ecNumber>
    </recommendedName>
    <alternativeName>
        <fullName evidence="1">Agmatine iminohydrolase</fullName>
    </alternativeName>
</protein>
<proteinExistence type="inferred from homology"/>
<sequence>MKTLQTSPKKDGYRMPGEFEAHKDVYLLWPERPDNWREGAKPAQATFAKVAETIAQFESVTVGVSDRQYTNARHMLADNIQVVEMSNNDSWIRDCGPTFVVNDKGDSRGVDWTFNAWGGLVDGLYFPWDKDDRVAQKVCEIEGRDRYRLDDLVLEGGSTHVDGEGTLLVTEECLLSDGRNPQLSKEQIESILKEYLNVEKIIWLKKGIYLDETNGHVDNIANFVKPGQVVLAWTDDQSDPQYAISKENYDMLINETDAKGRKLQVEKLYLPKPILITEAESQGVDTVDGTLPRLAGDRLAASYVNYYTANGGIVFPLFNDPMDEKAQEILQKLYPDRKIVGVPAREILLGGGNIHCITQQIPAGR</sequence>
<evidence type="ECO:0000255" key="1">
    <source>
        <dbReference type="HAMAP-Rule" id="MF_01841"/>
    </source>
</evidence>
<evidence type="ECO:0000305" key="2"/>
<comment type="catalytic activity">
    <reaction evidence="1">
        <text>agmatine + H2O = N-carbamoylputrescine + NH4(+)</text>
        <dbReference type="Rhea" id="RHEA:18037"/>
        <dbReference type="ChEBI" id="CHEBI:15377"/>
        <dbReference type="ChEBI" id="CHEBI:28938"/>
        <dbReference type="ChEBI" id="CHEBI:58145"/>
        <dbReference type="ChEBI" id="CHEBI:58318"/>
        <dbReference type="EC" id="3.5.3.12"/>
    </reaction>
</comment>
<comment type="similarity">
    <text evidence="1">Belongs to the agmatine deiminase family.</text>
</comment>
<comment type="sequence caution" evidence="2">
    <conflict type="erroneous initiation">
        <sequence resource="EMBL-CDS" id="CAI54369"/>
    </conflict>
</comment>
<keyword id="KW-0378">Hydrolase</keyword>
<keyword id="KW-1185">Reference proteome</keyword>
<gene>
    <name evidence="1" type="primary">aguA</name>
    <name type="synonym">labD</name>
    <name type="ordered locus">LCA_0070</name>
</gene>